<gene>
    <name evidence="1" type="primary">cysS</name>
    <name type="ordered locus">SAR0533</name>
</gene>
<protein>
    <recommendedName>
        <fullName evidence="1">Cysteine--tRNA ligase</fullName>
        <ecNumber evidence="1">6.1.1.16</ecNumber>
    </recommendedName>
    <alternativeName>
        <fullName evidence="1">Cysteinyl-tRNA synthetase</fullName>
        <shortName evidence="1">CysRS</shortName>
    </alternativeName>
</protein>
<comment type="catalytic activity">
    <reaction evidence="1">
        <text>tRNA(Cys) + L-cysteine + ATP = L-cysteinyl-tRNA(Cys) + AMP + diphosphate</text>
        <dbReference type="Rhea" id="RHEA:17773"/>
        <dbReference type="Rhea" id="RHEA-COMP:9661"/>
        <dbReference type="Rhea" id="RHEA-COMP:9679"/>
        <dbReference type="ChEBI" id="CHEBI:30616"/>
        <dbReference type="ChEBI" id="CHEBI:33019"/>
        <dbReference type="ChEBI" id="CHEBI:35235"/>
        <dbReference type="ChEBI" id="CHEBI:78442"/>
        <dbReference type="ChEBI" id="CHEBI:78517"/>
        <dbReference type="ChEBI" id="CHEBI:456215"/>
        <dbReference type="EC" id="6.1.1.16"/>
    </reaction>
</comment>
<comment type="cofactor">
    <cofactor evidence="1">
        <name>Zn(2+)</name>
        <dbReference type="ChEBI" id="CHEBI:29105"/>
    </cofactor>
    <text evidence="1">Binds 1 zinc ion per subunit.</text>
</comment>
<comment type="subunit">
    <text evidence="1">Monomer.</text>
</comment>
<comment type="subcellular location">
    <subcellularLocation>
        <location evidence="1">Cytoplasm</location>
    </subcellularLocation>
</comment>
<comment type="similarity">
    <text evidence="1">Belongs to the class-I aminoacyl-tRNA synthetase family.</text>
</comment>
<feature type="chain" id="PRO_0000159480" description="Cysteine--tRNA ligase">
    <location>
        <begin position="1"/>
        <end position="466"/>
    </location>
</feature>
<feature type="short sequence motif" description="'HIGH' region">
    <location>
        <begin position="30"/>
        <end position="40"/>
    </location>
</feature>
<feature type="short sequence motif" description="'KMSKS' region">
    <location>
        <begin position="265"/>
        <end position="269"/>
    </location>
</feature>
<feature type="binding site" evidence="1">
    <location>
        <position position="28"/>
    </location>
    <ligand>
        <name>Zn(2+)</name>
        <dbReference type="ChEBI" id="CHEBI:29105"/>
    </ligand>
</feature>
<feature type="binding site" evidence="1">
    <location>
        <position position="208"/>
    </location>
    <ligand>
        <name>Zn(2+)</name>
        <dbReference type="ChEBI" id="CHEBI:29105"/>
    </ligand>
</feature>
<feature type="binding site" evidence="1">
    <location>
        <position position="233"/>
    </location>
    <ligand>
        <name>Zn(2+)</name>
        <dbReference type="ChEBI" id="CHEBI:29105"/>
    </ligand>
</feature>
<feature type="binding site" evidence="1">
    <location>
        <position position="237"/>
    </location>
    <ligand>
        <name>Zn(2+)</name>
        <dbReference type="ChEBI" id="CHEBI:29105"/>
    </ligand>
</feature>
<feature type="binding site" evidence="1">
    <location>
        <position position="268"/>
    </location>
    <ligand>
        <name>ATP</name>
        <dbReference type="ChEBI" id="CHEBI:30616"/>
    </ligand>
</feature>
<accession>Q6GJD9</accession>
<name>SYC_STAAR</name>
<dbReference type="EC" id="6.1.1.16" evidence="1"/>
<dbReference type="EMBL" id="BX571856">
    <property type="protein sequence ID" value="CAG39555.1"/>
    <property type="molecule type" value="Genomic_DNA"/>
</dbReference>
<dbReference type="RefSeq" id="WP_000631983.1">
    <property type="nucleotide sequence ID" value="NC_002952.2"/>
</dbReference>
<dbReference type="SMR" id="Q6GJD9"/>
<dbReference type="KEGG" id="sar:SAR0533"/>
<dbReference type="HOGENOM" id="CLU_013528_0_1_9"/>
<dbReference type="Proteomes" id="UP000000596">
    <property type="component" value="Chromosome"/>
</dbReference>
<dbReference type="GO" id="GO:0005829">
    <property type="term" value="C:cytosol"/>
    <property type="evidence" value="ECO:0007669"/>
    <property type="project" value="TreeGrafter"/>
</dbReference>
<dbReference type="GO" id="GO:0005524">
    <property type="term" value="F:ATP binding"/>
    <property type="evidence" value="ECO:0007669"/>
    <property type="project" value="UniProtKB-UniRule"/>
</dbReference>
<dbReference type="GO" id="GO:0004817">
    <property type="term" value="F:cysteine-tRNA ligase activity"/>
    <property type="evidence" value="ECO:0007669"/>
    <property type="project" value="UniProtKB-UniRule"/>
</dbReference>
<dbReference type="GO" id="GO:0008270">
    <property type="term" value="F:zinc ion binding"/>
    <property type="evidence" value="ECO:0007669"/>
    <property type="project" value="UniProtKB-UniRule"/>
</dbReference>
<dbReference type="GO" id="GO:0006423">
    <property type="term" value="P:cysteinyl-tRNA aminoacylation"/>
    <property type="evidence" value="ECO:0007669"/>
    <property type="project" value="UniProtKB-UniRule"/>
</dbReference>
<dbReference type="CDD" id="cd00672">
    <property type="entry name" value="CysRS_core"/>
    <property type="match status" value="1"/>
</dbReference>
<dbReference type="FunFam" id="1.20.120.1910:FF:000002">
    <property type="entry name" value="Cysteine--tRNA ligase"/>
    <property type="match status" value="1"/>
</dbReference>
<dbReference type="FunFam" id="3.40.50.620:FF:000009">
    <property type="entry name" value="Cysteine--tRNA ligase"/>
    <property type="match status" value="1"/>
</dbReference>
<dbReference type="Gene3D" id="1.20.120.1910">
    <property type="entry name" value="Cysteine-tRNA ligase, C-terminal anti-codon recognition domain"/>
    <property type="match status" value="1"/>
</dbReference>
<dbReference type="Gene3D" id="3.40.50.620">
    <property type="entry name" value="HUPs"/>
    <property type="match status" value="1"/>
</dbReference>
<dbReference type="HAMAP" id="MF_00041">
    <property type="entry name" value="Cys_tRNA_synth"/>
    <property type="match status" value="1"/>
</dbReference>
<dbReference type="InterPro" id="IPR015803">
    <property type="entry name" value="Cys-tRNA-ligase"/>
</dbReference>
<dbReference type="InterPro" id="IPR015273">
    <property type="entry name" value="Cys-tRNA-synt_Ia_DALR"/>
</dbReference>
<dbReference type="InterPro" id="IPR024909">
    <property type="entry name" value="Cys-tRNA/MSH_ligase"/>
</dbReference>
<dbReference type="InterPro" id="IPR056411">
    <property type="entry name" value="CysS_C"/>
</dbReference>
<dbReference type="InterPro" id="IPR014729">
    <property type="entry name" value="Rossmann-like_a/b/a_fold"/>
</dbReference>
<dbReference type="InterPro" id="IPR032678">
    <property type="entry name" value="tRNA-synt_1_cat_dom"/>
</dbReference>
<dbReference type="InterPro" id="IPR009080">
    <property type="entry name" value="tRNAsynth_Ia_anticodon-bd"/>
</dbReference>
<dbReference type="NCBIfam" id="TIGR00435">
    <property type="entry name" value="cysS"/>
    <property type="match status" value="1"/>
</dbReference>
<dbReference type="PANTHER" id="PTHR10890:SF3">
    <property type="entry name" value="CYSTEINE--TRNA LIGASE, CYTOPLASMIC"/>
    <property type="match status" value="1"/>
</dbReference>
<dbReference type="PANTHER" id="PTHR10890">
    <property type="entry name" value="CYSTEINYL-TRNA SYNTHETASE"/>
    <property type="match status" value="1"/>
</dbReference>
<dbReference type="Pfam" id="PF23493">
    <property type="entry name" value="CysS_C"/>
    <property type="match status" value="1"/>
</dbReference>
<dbReference type="Pfam" id="PF09190">
    <property type="entry name" value="DALR_2"/>
    <property type="match status" value="1"/>
</dbReference>
<dbReference type="Pfam" id="PF01406">
    <property type="entry name" value="tRNA-synt_1e"/>
    <property type="match status" value="1"/>
</dbReference>
<dbReference type="PRINTS" id="PR00983">
    <property type="entry name" value="TRNASYNTHCYS"/>
</dbReference>
<dbReference type="SMART" id="SM00840">
    <property type="entry name" value="DALR_2"/>
    <property type="match status" value="1"/>
</dbReference>
<dbReference type="SUPFAM" id="SSF47323">
    <property type="entry name" value="Anticodon-binding domain of a subclass of class I aminoacyl-tRNA synthetases"/>
    <property type="match status" value="1"/>
</dbReference>
<dbReference type="SUPFAM" id="SSF52374">
    <property type="entry name" value="Nucleotidylyl transferase"/>
    <property type="match status" value="1"/>
</dbReference>
<proteinExistence type="inferred from homology"/>
<keyword id="KW-0030">Aminoacyl-tRNA synthetase</keyword>
<keyword id="KW-0067">ATP-binding</keyword>
<keyword id="KW-0963">Cytoplasm</keyword>
<keyword id="KW-0436">Ligase</keyword>
<keyword id="KW-0479">Metal-binding</keyword>
<keyword id="KW-0547">Nucleotide-binding</keyword>
<keyword id="KW-0648">Protein biosynthesis</keyword>
<keyword id="KW-0862">Zinc</keyword>
<sequence length="466" mass="53655">MITLYNTLTRQKEVFKPIEPGKVKMYVCGPTVYNYIHIGNARPAINYDVVRRYFEYQGYNVEYVSNFTDVDDKLIKRSQELNQTVPEIAEKYIAAFHEDVGALNVRKATSNPRVMDHMDDIIQFIKDLVDQGYAYESGGDVYFRTRKFEGYGKLSHQSIDDLKVGARIDAGEHKEDALDFTLWKKAKPGEISWDSPFGEGRPGWHIECSVMAFHELGATIDIHAGGSDLQFPHHENEIAQSEAHNHAPFANYWMHNGFINIDNEKMSKSLGNFILVHDIIKEVDPDVLRFFVISVHYRSPINYNLELVESARSGLERIRNSYQLIEERAQIATNIENQQTYIDQIDAILNRFETVMNDDFNTANAITAWYDLAKLANKYVLENTTSTEVIDKFKAVYQIFSDVLGVPLKSKKADELLDEDVEKLIEERNEARKNKDFARADEIRDMLKSQNIILEDTPQGVRFKRG</sequence>
<evidence type="ECO:0000255" key="1">
    <source>
        <dbReference type="HAMAP-Rule" id="MF_00041"/>
    </source>
</evidence>
<reference key="1">
    <citation type="journal article" date="2004" name="Proc. Natl. Acad. Sci. U.S.A.">
        <title>Complete genomes of two clinical Staphylococcus aureus strains: evidence for the rapid evolution of virulence and drug resistance.</title>
        <authorList>
            <person name="Holden M.T.G."/>
            <person name="Feil E.J."/>
            <person name="Lindsay J.A."/>
            <person name="Peacock S.J."/>
            <person name="Day N.P.J."/>
            <person name="Enright M.C."/>
            <person name="Foster T.J."/>
            <person name="Moore C.E."/>
            <person name="Hurst L."/>
            <person name="Atkin R."/>
            <person name="Barron A."/>
            <person name="Bason N."/>
            <person name="Bentley S.D."/>
            <person name="Chillingworth C."/>
            <person name="Chillingworth T."/>
            <person name="Churcher C."/>
            <person name="Clark L."/>
            <person name="Corton C."/>
            <person name="Cronin A."/>
            <person name="Doggett J."/>
            <person name="Dowd L."/>
            <person name="Feltwell T."/>
            <person name="Hance Z."/>
            <person name="Harris B."/>
            <person name="Hauser H."/>
            <person name="Holroyd S."/>
            <person name="Jagels K."/>
            <person name="James K.D."/>
            <person name="Lennard N."/>
            <person name="Line A."/>
            <person name="Mayes R."/>
            <person name="Moule S."/>
            <person name="Mungall K."/>
            <person name="Ormond D."/>
            <person name="Quail M.A."/>
            <person name="Rabbinowitsch E."/>
            <person name="Rutherford K.M."/>
            <person name="Sanders M."/>
            <person name="Sharp S."/>
            <person name="Simmonds M."/>
            <person name="Stevens K."/>
            <person name="Whitehead S."/>
            <person name="Barrell B.G."/>
            <person name="Spratt B.G."/>
            <person name="Parkhill J."/>
        </authorList>
    </citation>
    <scope>NUCLEOTIDE SEQUENCE [LARGE SCALE GENOMIC DNA]</scope>
    <source>
        <strain>MRSA252</strain>
    </source>
</reference>
<organism>
    <name type="scientific">Staphylococcus aureus (strain MRSA252)</name>
    <dbReference type="NCBI Taxonomy" id="282458"/>
    <lineage>
        <taxon>Bacteria</taxon>
        <taxon>Bacillati</taxon>
        <taxon>Bacillota</taxon>
        <taxon>Bacilli</taxon>
        <taxon>Bacillales</taxon>
        <taxon>Staphylococcaceae</taxon>
        <taxon>Staphylococcus</taxon>
    </lineage>
</organism>